<dbReference type="EC" id="3.1.6.1" evidence="2"/>
<dbReference type="EC" id="3.1.6.18" evidence="2"/>
<dbReference type="EMBL" id="AAEX02030697">
    <property type="status" value="NOT_ANNOTATED_CDS"/>
    <property type="molecule type" value="Genomic_DNA"/>
</dbReference>
<dbReference type="EMBL" id="BN000767">
    <property type="protein sequence ID" value="CAI85013.1"/>
    <property type="molecule type" value="mRNA"/>
</dbReference>
<dbReference type="RefSeq" id="NP_001041582.1">
    <property type="nucleotide sequence ID" value="NM_001048117.1"/>
</dbReference>
<dbReference type="SMR" id="Q32KH0"/>
<dbReference type="FunCoup" id="Q32KH0">
    <property type="interactions" value="59"/>
</dbReference>
<dbReference type="STRING" id="9615.ENSCAFP00000011713"/>
<dbReference type="GlyCosmos" id="Q32KH0">
    <property type="glycosylation" value="6 sites, No reported glycans"/>
</dbReference>
<dbReference type="PaxDb" id="9612-ENSCAFP00000011713"/>
<dbReference type="Ensembl" id="ENSCAFT00000012646.5">
    <property type="protein sequence ID" value="ENSCAFP00000011713.3"/>
    <property type="gene ID" value="ENSCAFG00000007914.5"/>
</dbReference>
<dbReference type="Ensembl" id="ENSCAFT00845024875.1">
    <property type="protein sequence ID" value="ENSCAFP00845019569.1"/>
    <property type="gene ID" value="ENSCAFG00845013918.1"/>
</dbReference>
<dbReference type="GeneID" id="488903"/>
<dbReference type="KEGG" id="cfa:488903"/>
<dbReference type="CTD" id="153642"/>
<dbReference type="VEuPathDB" id="HostDB:ENSCAFG00845013918"/>
<dbReference type="VGNC" id="VGNC:38146">
    <property type="gene designation" value="ARSK"/>
</dbReference>
<dbReference type="eggNOG" id="KOG3731">
    <property type="taxonomic scope" value="Eukaryota"/>
</dbReference>
<dbReference type="GeneTree" id="ENSGT00940000158982"/>
<dbReference type="HOGENOM" id="CLU_006332_6_0_1"/>
<dbReference type="InParanoid" id="Q32KH0"/>
<dbReference type="OMA" id="RAYFGAC"/>
<dbReference type="OrthoDB" id="1886626at2759"/>
<dbReference type="TreeFam" id="TF313545"/>
<dbReference type="Reactome" id="R-CFA-1663150">
    <property type="pathway name" value="The activation of arylsulfatases"/>
</dbReference>
<dbReference type="Reactome" id="R-CFA-9840310">
    <property type="pathway name" value="Glycosphingolipid catabolism"/>
</dbReference>
<dbReference type="Proteomes" id="UP000002254">
    <property type="component" value="Chromosome 3"/>
</dbReference>
<dbReference type="Proteomes" id="UP000694429">
    <property type="component" value="Unplaced"/>
</dbReference>
<dbReference type="Proteomes" id="UP000694542">
    <property type="component" value="Unplaced"/>
</dbReference>
<dbReference type="Proteomes" id="UP000805418">
    <property type="component" value="Chromosome 3"/>
</dbReference>
<dbReference type="Bgee" id="ENSCAFG00000007914">
    <property type="expression patterns" value="Expressed in spinal cord and 46 other cell types or tissues"/>
</dbReference>
<dbReference type="GO" id="GO:0005576">
    <property type="term" value="C:extracellular region"/>
    <property type="evidence" value="ECO:0000250"/>
    <property type="project" value="UniProtKB"/>
</dbReference>
<dbReference type="GO" id="GO:0005764">
    <property type="term" value="C:lysosome"/>
    <property type="evidence" value="ECO:0000250"/>
    <property type="project" value="UniProtKB"/>
</dbReference>
<dbReference type="GO" id="GO:0004065">
    <property type="term" value="F:arylsulfatase activity"/>
    <property type="evidence" value="ECO:0000250"/>
    <property type="project" value="UniProtKB"/>
</dbReference>
<dbReference type="GO" id="GO:0015024">
    <property type="term" value="F:glucuronate-2-sulfatase activity"/>
    <property type="evidence" value="ECO:0000250"/>
    <property type="project" value="UniProtKB"/>
</dbReference>
<dbReference type="GO" id="GO:0046872">
    <property type="term" value="F:metal ion binding"/>
    <property type="evidence" value="ECO:0007669"/>
    <property type="project" value="UniProtKB-KW"/>
</dbReference>
<dbReference type="CDD" id="cd16171">
    <property type="entry name" value="ARSK"/>
    <property type="match status" value="1"/>
</dbReference>
<dbReference type="FunFam" id="3.40.720.10:FF:000039">
    <property type="entry name" value="arylsulfatase K"/>
    <property type="match status" value="1"/>
</dbReference>
<dbReference type="Gene3D" id="3.40.720.10">
    <property type="entry name" value="Alkaline Phosphatase, subunit A"/>
    <property type="match status" value="1"/>
</dbReference>
<dbReference type="InterPro" id="IPR017850">
    <property type="entry name" value="Alkaline_phosphatase_core_sf"/>
</dbReference>
<dbReference type="InterPro" id="IPR047892">
    <property type="entry name" value="ARSK"/>
</dbReference>
<dbReference type="InterPro" id="IPR051849">
    <property type="entry name" value="GAG-degrading_sulfatase"/>
</dbReference>
<dbReference type="InterPro" id="IPR000917">
    <property type="entry name" value="Sulfatase_N"/>
</dbReference>
<dbReference type="PANTHER" id="PTHR46615">
    <property type="entry name" value="ARYLSULFATASE K"/>
    <property type="match status" value="1"/>
</dbReference>
<dbReference type="PANTHER" id="PTHR46615:SF1">
    <property type="entry name" value="ARYLSULFATASE K"/>
    <property type="match status" value="1"/>
</dbReference>
<dbReference type="Pfam" id="PF00884">
    <property type="entry name" value="Sulfatase"/>
    <property type="match status" value="1"/>
</dbReference>
<dbReference type="SUPFAM" id="SSF53649">
    <property type="entry name" value="Alkaline phosphatase-like"/>
    <property type="match status" value="1"/>
</dbReference>
<reference key="1">
    <citation type="journal article" date="2005" name="Nature">
        <title>Genome sequence, comparative analysis and haplotype structure of the domestic dog.</title>
        <authorList>
            <person name="Lindblad-Toh K."/>
            <person name="Wade C.M."/>
            <person name="Mikkelsen T.S."/>
            <person name="Karlsson E.K."/>
            <person name="Jaffe D.B."/>
            <person name="Kamal M."/>
            <person name="Clamp M."/>
            <person name="Chang J.L."/>
            <person name="Kulbokas E.J. III"/>
            <person name="Zody M.C."/>
            <person name="Mauceli E."/>
            <person name="Xie X."/>
            <person name="Breen M."/>
            <person name="Wayne R.K."/>
            <person name="Ostrander E.A."/>
            <person name="Ponting C.P."/>
            <person name="Galibert F."/>
            <person name="Smith D.R."/>
            <person name="deJong P.J."/>
            <person name="Kirkness E.F."/>
            <person name="Alvarez P."/>
            <person name="Biagi T."/>
            <person name="Brockman W."/>
            <person name="Butler J."/>
            <person name="Chin C.-W."/>
            <person name="Cook A."/>
            <person name="Cuff J."/>
            <person name="Daly M.J."/>
            <person name="DeCaprio D."/>
            <person name="Gnerre S."/>
            <person name="Grabherr M."/>
            <person name="Kellis M."/>
            <person name="Kleber M."/>
            <person name="Bardeleben C."/>
            <person name="Goodstadt L."/>
            <person name="Heger A."/>
            <person name="Hitte C."/>
            <person name="Kim L."/>
            <person name="Koepfli K.-P."/>
            <person name="Parker H.G."/>
            <person name="Pollinger J.P."/>
            <person name="Searle S.M.J."/>
            <person name="Sutter N.B."/>
            <person name="Thomas R."/>
            <person name="Webber C."/>
            <person name="Baldwin J."/>
            <person name="Abebe A."/>
            <person name="Abouelleil A."/>
            <person name="Aftuck L."/>
            <person name="Ait-Zahra M."/>
            <person name="Aldredge T."/>
            <person name="Allen N."/>
            <person name="An P."/>
            <person name="Anderson S."/>
            <person name="Antoine C."/>
            <person name="Arachchi H."/>
            <person name="Aslam A."/>
            <person name="Ayotte L."/>
            <person name="Bachantsang P."/>
            <person name="Barry A."/>
            <person name="Bayul T."/>
            <person name="Benamara M."/>
            <person name="Berlin A."/>
            <person name="Bessette D."/>
            <person name="Blitshteyn B."/>
            <person name="Bloom T."/>
            <person name="Blye J."/>
            <person name="Boguslavskiy L."/>
            <person name="Bonnet C."/>
            <person name="Boukhgalter B."/>
            <person name="Brown A."/>
            <person name="Cahill P."/>
            <person name="Calixte N."/>
            <person name="Camarata J."/>
            <person name="Cheshatsang Y."/>
            <person name="Chu J."/>
            <person name="Citroen M."/>
            <person name="Collymore A."/>
            <person name="Cooke P."/>
            <person name="Dawoe T."/>
            <person name="Daza R."/>
            <person name="Decktor K."/>
            <person name="DeGray S."/>
            <person name="Dhargay N."/>
            <person name="Dooley K."/>
            <person name="Dooley K."/>
            <person name="Dorje P."/>
            <person name="Dorjee K."/>
            <person name="Dorris L."/>
            <person name="Duffey N."/>
            <person name="Dupes A."/>
            <person name="Egbiremolen O."/>
            <person name="Elong R."/>
            <person name="Falk J."/>
            <person name="Farina A."/>
            <person name="Faro S."/>
            <person name="Ferguson D."/>
            <person name="Ferreira P."/>
            <person name="Fisher S."/>
            <person name="FitzGerald M."/>
            <person name="Foley K."/>
            <person name="Foley C."/>
            <person name="Franke A."/>
            <person name="Friedrich D."/>
            <person name="Gage D."/>
            <person name="Garber M."/>
            <person name="Gearin G."/>
            <person name="Giannoukos G."/>
            <person name="Goode T."/>
            <person name="Goyette A."/>
            <person name="Graham J."/>
            <person name="Grandbois E."/>
            <person name="Gyaltsen K."/>
            <person name="Hafez N."/>
            <person name="Hagopian D."/>
            <person name="Hagos B."/>
            <person name="Hall J."/>
            <person name="Healy C."/>
            <person name="Hegarty R."/>
            <person name="Honan T."/>
            <person name="Horn A."/>
            <person name="Houde N."/>
            <person name="Hughes L."/>
            <person name="Hunnicutt L."/>
            <person name="Husby M."/>
            <person name="Jester B."/>
            <person name="Jones C."/>
            <person name="Kamat A."/>
            <person name="Kanga B."/>
            <person name="Kells C."/>
            <person name="Khazanovich D."/>
            <person name="Kieu A.C."/>
            <person name="Kisner P."/>
            <person name="Kumar M."/>
            <person name="Lance K."/>
            <person name="Landers T."/>
            <person name="Lara M."/>
            <person name="Lee W."/>
            <person name="Leger J.-P."/>
            <person name="Lennon N."/>
            <person name="Leuper L."/>
            <person name="LeVine S."/>
            <person name="Liu J."/>
            <person name="Liu X."/>
            <person name="Lokyitsang Y."/>
            <person name="Lokyitsang T."/>
            <person name="Lui A."/>
            <person name="Macdonald J."/>
            <person name="Major J."/>
            <person name="Marabella R."/>
            <person name="Maru K."/>
            <person name="Matthews C."/>
            <person name="McDonough S."/>
            <person name="Mehta T."/>
            <person name="Meldrim J."/>
            <person name="Melnikov A."/>
            <person name="Meneus L."/>
            <person name="Mihalev A."/>
            <person name="Mihova T."/>
            <person name="Miller K."/>
            <person name="Mittelman R."/>
            <person name="Mlenga V."/>
            <person name="Mulrain L."/>
            <person name="Munson G."/>
            <person name="Navidi A."/>
            <person name="Naylor J."/>
            <person name="Nguyen T."/>
            <person name="Nguyen N."/>
            <person name="Nguyen C."/>
            <person name="Nguyen T."/>
            <person name="Nicol R."/>
            <person name="Norbu N."/>
            <person name="Norbu C."/>
            <person name="Novod N."/>
            <person name="Nyima T."/>
            <person name="Olandt P."/>
            <person name="O'Neill B."/>
            <person name="O'Neill K."/>
            <person name="Osman S."/>
            <person name="Oyono L."/>
            <person name="Patti C."/>
            <person name="Perrin D."/>
            <person name="Phunkhang P."/>
            <person name="Pierre F."/>
            <person name="Priest M."/>
            <person name="Rachupka A."/>
            <person name="Raghuraman S."/>
            <person name="Rameau R."/>
            <person name="Ray V."/>
            <person name="Raymond C."/>
            <person name="Rege F."/>
            <person name="Rise C."/>
            <person name="Rogers J."/>
            <person name="Rogov P."/>
            <person name="Sahalie J."/>
            <person name="Settipalli S."/>
            <person name="Sharpe T."/>
            <person name="Shea T."/>
            <person name="Sheehan M."/>
            <person name="Sherpa N."/>
            <person name="Shi J."/>
            <person name="Shih D."/>
            <person name="Sloan J."/>
            <person name="Smith C."/>
            <person name="Sparrow T."/>
            <person name="Stalker J."/>
            <person name="Stange-Thomann N."/>
            <person name="Stavropoulos S."/>
            <person name="Stone C."/>
            <person name="Stone S."/>
            <person name="Sykes S."/>
            <person name="Tchuinga P."/>
            <person name="Tenzing P."/>
            <person name="Tesfaye S."/>
            <person name="Thoulutsang D."/>
            <person name="Thoulutsang Y."/>
            <person name="Topham K."/>
            <person name="Topping I."/>
            <person name="Tsamla T."/>
            <person name="Vassiliev H."/>
            <person name="Venkataraman V."/>
            <person name="Vo A."/>
            <person name="Wangchuk T."/>
            <person name="Wangdi T."/>
            <person name="Weiand M."/>
            <person name="Wilkinson J."/>
            <person name="Wilson A."/>
            <person name="Yadav S."/>
            <person name="Yang S."/>
            <person name="Yang X."/>
            <person name="Young G."/>
            <person name="Yu Q."/>
            <person name="Zainoun J."/>
            <person name="Zembek L."/>
            <person name="Zimmer A."/>
            <person name="Lander E.S."/>
        </authorList>
    </citation>
    <scope>NUCLEOTIDE SEQUENCE [LARGE SCALE GENOMIC DNA]</scope>
    <source>
        <strain>Boxer</strain>
    </source>
</reference>
<reference key="2">
    <citation type="journal article" date="2005" name="Hum. Mol. Genet.">
        <title>Sulfatases and sulfatase modifying factors: an exclusive and promiscuous relationship.</title>
        <authorList>
            <person name="Sardiello M."/>
            <person name="Annunziata I."/>
            <person name="Roma G."/>
            <person name="Ballabio A."/>
        </authorList>
    </citation>
    <scope>IDENTIFICATION</scope>
</reference>
<sequence>MLLLWLSVFAASALAAPDRGAGGRRRGAAGGWPGAPNVVLVVSDSFDGRLTFYPGSQAVKLPFINLMKAHGTSFLNAYTNSPICCPSRAAMWSGLFTHLTESWNNFKGLDPNYTTWMDIMEKHGYRTQKFGKLDYTSGHHSISNRVEAWTRDVAFLLRQEGRPMINLIPKKTKVRVMEGDWKNTDRAVNWLRKEASNSTQPFVLYLGLNLPHPYPSPSSGENFGSSTFHTSLYWLKKVSYDAIKIPKWSPLSEMHPVDYYSSYTKNCTGKFTKKEIKNIRAFYYAMCAETDAMLGEIILALRQLDLLQNTIVIYTSDHGELAMEHRQFYKMSMYEASAHIPLLMMGPGIKANQQVSNVVSLVDIYPTMLDIAGAPLPQNLSGYSLLPLSSEMFWNEHKLKNLHPPWILSEFHGCNVNASTYMLRTNQWKYIAYSDGTSVLPQLFDLFSDPDELTNIATKFPEVTYSLDQKLRSIINYPKVSASVHQYNKEQFIKWKQSVGQNYSNVIANLRWHQDWLKEPRKYESAINQWLKTPH</sequence>
<gene>
    <name type="primary">ARSK</name>
</gene>
<protein>
    <recommendedName>
        <fullName>Arylsulfatase K</fullName>
        <shortName>ASK</shortName>
        <ecNumber evidence="2">3.1.6.1</ecNumber>
    </recommendedName>
    <alternativeName>
        <fullName>Glucuronate-2-sulfatase</fullName>
        <ecNumber evidence="2">3.1.6.18</ecNumber>
    </alternativeName>
</protein>
<feature type="signal peptide" evidence="3">
    <location>
        <begin position="1"/>
        <end position="22"/>
    </location>
</feature>
<feature type="chain" id="PRO_0000250474" description="Arylsulfatase K">
    <location>
        <begin position="23"/>
        <end position="535"/>
    </location>
</feature>
<feature type="active site" description="Nucleophile" evidence="1">
    <location>
        <position position="84"/>
    </location>
</feature>
<feature type="binding site" evidence="1">
    <location>
        <position position="44"/>
    </location>
    <ligand>
        <name>Ca(2+)</name>
        <dbReference type="ChEBI" id="CHEBI:29108"/>
    </ligand>
</feature>
<feature type="binding site" description="via 3-oxoalanine" evidence="1">
    <location>
        <position position="84"/>
    </location>
    <ligand>
        <name>Ca(2+)</name>
        <dbReference type="ChEBI" id="CHEBI:29108"/>
    </ligand>
</feature>
<feature type="binding site" evidence="1">
    <location>
        <position position="132"/>
    </location>
    <ligand>
        <name>substrate</name>
    </ligand>
</feature>
<feature type="binding site" evidence="1">
    <location>
        <position position="255"/>
    </location>
    <ligand>
        <name>substrate</name>
    </ligand>
</feature>
<feature type="binding site" evidence="1">
    <location>
        <position position="317"/>
    </location>
    <ligand>
        <name>Ca(2+)</name>
        <dbReference type="ChEBI" id="CHEBI:29108"/>
    </ligand>
</feature>
<feature type="binding site" evidence="1">
    <location>
        <position position="318"/>
    </location>
    <ligand>
        <name>Ca(2+)</name>
        <dbReference type="ChEBI" id="CHEBI:29108"/>
    </ligand>
</feature>
<feature type="modified residue" description="3-oxoalanine (Cys)" evidence="2">
    <location>
        <position position="84"/>
    </location>
</feature>
<feature type="glycosylation site" description="N-linked (GlcNAc...) asparagine" evidence="3">
    <location>
        <position position="112"/>
    </location>
</feature>
<feature type="glycosylation site" description="N-linked (GlcNAc...) asparagine" evidence="3">
    <location>
        <position position="197"/>
    </location>
</feature>
<feature type="glycosylation site" description="N-linked (GlcNAc...) asparagine" evidence="3">
    <location>
        <position position="266"/>
    </location>
</feature>
<feature type="glycosylation site" description="N-linked (GlcNAc...) asparagine" evidence="3">
    <location>
        <position position="379"/>
    </location>
</feature>
<feature type="glycosylation site" description="N-linked (GlcNAc...) asparagine" evidence="3">
    <location>
        <position position="417"/>
    </location>
</feature>
<feature type="glycosylation site" description="N-linked (GlcNAc...) asparagine" evidence="3">
    <location>
        <position position="502"/>
    </location>
</feature>
<proteinExistence type="evidence at transcript level"/>
<keyword id="KW-0106">Calcium</keyword>
<keyword id="KW-0325">Glycoprotein</keyword>
<keyword id="KW-0378">Hydrolase</keyword>
<keyword id="KW-0458">Lysosome</keyword>
<keyword id="KW-0479">Metal-binding</keyword>
<keyword id="KW-1185">Reference proteome</keyword>
<keyword id="KW-0964">Secreted</keyword>
<keyword id="KW-0732">Signal</keyword>
<name>ARSK_CANLF</name>
<organism>
    <name type="scientific">Canis lupus familiaris</name>
    <name type="common">Dog</name>
    <name type="synonym">Canis familiaris</name>
    <dbReference type="NCBI Taxonomy" id="9615"/>
    <lineage>
        <taxon>Eukaryota</taxon>
        <taxon>Metazoa</taxon>
        <taxon>Chordata</taxon>
        <taxon>Craniata</taxon>
        <taxon>Vertebrata</taxon>
        <taxon>Euteleostomi</taxon>
        <taxon>Mammalia</taxon>
        <taxon>Eutheria</taxon>
        <taxon>Laurasiatheria</taxon>
        <taxon>Carnivora</taxon>
        <taxon>Caniformia</taxon>
        <taxon>Canidae</taxon>
        <taxon>Canis</taxon>
    </lineage>
</organism>
<evidence type="ECO:0000250" key="1">
    <source>
        <dbReference type="UniProtKB" id="P15289"/>
    </source>
</evidence>
<evidence type="ECO:0000250" key="2">
    <source>
        <dbReference type="UniProtKB" id="Q6UWY0"/>
    </source>
</evidence>
<evidence type="ECO:0000255" key="3"/>
<evidence type="ECO:0000305" key="4"/>
<accession>Q32KH0</accession>
<comment type="function">
    <text evidence="2">Catalyzes the hydrolysis of pseudosubstrates such as p-nitrocatechol sulfate and p-nitrophenyl sulfate (By similarity). Catalyzes the hydrolysis of the 2-sulfate groups of the 2-O-sulfo-D-glucuronate residues of chondroitin sulfate, heparin and heparitin sulfate (By similarity). Acts selectively on 2-sulfoglucuronate and lacks activity against 2-sulfoiduronate (By similarity).</text>
</comment>
<comment type="catalytic activity">
    <reaction evidence="2">
        <text>an aryl sulfate + H2O = a phenol + sulfate + H(+)</text>
        <dbReference type="Rhea" id="RHEA:17261"/>
        <dbReference type="ChEBI" id="CHEBI:15377"/>
        <dbReference type="ChEBI" id="CHEBI:15378"/>
        <dbReference type="ChEBI" id="CHEBI:16189"/>
        <dbReference type="ChEBI" id="CHEBI:33853"/>
        <dbReference type="ChEBI" id="CHEBI:140317"/>
        <dbReference type="EC" id="3.1.6.1"/>
    </reaction>
</comment>
<comment type="catalytic activity">
    <reaction evidence="2">
        <text>Hydrolysis of the 2-sulfate groups of the 2-O-sulfo-D-glucuronate residues of chondroitin sulfate, heparin and heparitin sulfate.</text>
        <dbReference type="EC" id="3.1.6.18"/>
    </reaction>
</comment>
<comment type="cofactor">
    <cofactor evidence="1">
        <name>Ca(2+)</name>
        <dbReference type="ChEBI" id="CHEBI:29108"/>
    </cofactor>
    <text evidence="1">Binds 1 Ca(2+) ion per subunit.</text>
</comment>
<comment type="subcellular location">
    <subcellularLocation>
        <location evidence="2">Secreted</location>
    </subcellularLocation>
    <subcellularLocation>
        <location evidence="2">Lysosome</location>
    </subcellularLocation>
</comment>
<comment type="PTM">
    <text evidence="2">The conversion to 3-oxoalanine (also known as C-formylglycine, FGly), of a serine or cysteine residue in prokaryotes and of a cysteine residue in eukaryotes, is critical for catalytic activity.</text>
</comment>
<comment type="PTM">
    <text evidence="2">The 75-kDa precursor undergoes proteolytic processing to yield a 23 kDa form.</text>
</comment>
<comment type="PTM">
    <text evidence="2">N-glycosylated with both high mannose and complex type sugars.</text>
</comment>
<comment type="similarity">
    <text evidence="4">Belongs to the sulfatase family.</text>
</comment>